<organism>
    <name type="scientific">Arabidopsis thaliana</name>
    <name type="common">Mouse-ear cress</name>
    <dbReference type="NCBI Taxonomy" id="3702"/>
    <lineage>
        <taxon>Eukaryota</taxon>
        <taxon>Viridiplantae</taxon>
        <taxon>Streptophyta</taxon>
        <taxon>Embryophyta</taxon>
        <taxon>Tracheophyta</taxon>
        <taxon>Spermatophyta</taxon>
        <taxon>Magnoliopsida</taxon>
        <taxon>eudicotyledons</taxon>
        <taxon>Gunneridae</taxon>
        <taxon>Pentapetalae</taxon>
        <taxon>rosids</taxon>
        <taxon>malvids</taxon>
        <taxon>Brassicales</taxon>
        <taxon>Brassicaceae</taxon>
        <taxon>Camelineae</taxon>
        <taxon>Arabidopsis</taxon>
    </lineage>
</organism>
<protein>
    <recommendedName>
        <fullName evidence="6 7">Cytochrome B5 isoform C</fullName>
        <shortName evidence="6 7">AtCb5-C</shortName>
    </recommendedName>
</protein>
<gene>
    <name evidence="8" type="primary">CYTB5-C</name>
    <name evidence="6 7" type="synonym">CB5-C</name>
    <name type="ordered locus">At2g46650</name>
    <name type="ORF">T3A4.3</name>
</gene>
<name>CYB5C_ARATH</name>
<keyword id="KW-0249">Electron transport</keyword>
<keyword id="KW-0256">Endoplasmic reticulum</keyword>
<keyword id="KW-0349">Heme</keyword>
<keyword id="KW-0408">Iron</keyword>
<keyword id="KW-0472">Membrane</keyword>
<keyword id="KW-0479">Metal-binding</keyword>
<keyword id="KW-1185">Reference proteome</keyword>
<keyword id="KW-0812">Transmembrane</keyword>
<keyword id="KW-1133">Transmembrane helix</keyword>
<keyword id="KW-0813">Transport</keyword>
<proteinExistence type="evidence at protein level"/>
<sequence length="132" mass="14873">MANLISFHDVAKHKCKNDCWILIHGKVYDISTFMDEHPGGDNVLLAVTGKDASIDFEDVNHSKDAKELMKKYCIGDVDQSTVPVTQQYIPPWEKESTAAETTKEESGKKLLIYLIPLLILGVAFALRFYNNK</sequence>
<feature type="chain" id="PRO_0000419612" description="Cytochrome B5 isoform C">
    <location>
        <begin position="1"/>
        <end position="132"/>
    </location>
</feature>
<feature type="transmembrane region" description="Helical" evidence="1">
    <location>
        <begin position="110"/>
        <end position="129"/>
    </location>
</feature>
<feature type="domain" description="Cytochrome b5 heme-binding" evidence="2">
    <location>
        <begin position="2"/>
        <end position="78"/>
    </location>
</feature>
<feature type="binding site" description="axial binding residue" evidence="2">
    <location>
        <position position="37"/>
    </location>
    <ligand>
        <name>heme</name>
        <dbReference type="ChEBI" id="CHEBI:30413"/>
    </ligand>
    <ligandPart>
        <name>Fe</name>
        <dbReference type="ChEBI" id="CHEBI:18248"/>
    </ligandPart>
</feature>
<feature type="binding site" description="axial binding residue" evidence="2">
    <location>
        <position position="61"/>
    </location>
    <ligand>
        <name>heme</name>
        <dbReference type="ChEBI" id="CHEBI:30413"/>
    </ligand>
    <ligandPart>
        <name>Fe</name>
        <dbReference type="ChEBI" id="CHEBI:18248"/>
    </ligandPart>
</feature>
<feature type="sequence conflict" description="In Ref. 4; BAD43205." evidence="8" ref="4">
    <original>I</original>
    <variation>V</variation>
    <location>
        <position position="89"/>
    </location>
</feature>
<reference key="1">
    <citation type="journal article" date="1999" name="Nature">
        <title>Sequence and analysis of chromosome 2 of the plant Arabidopsis thaliana.</title>
        <authorList>
            <person name="Lin X."/>
            <person name="Kaul S."/>
            <person name="Rounsley S.D."/>
            <person name="Shea T.P."/>
            <person name="Benito M.-I."/>
            <person name="Town C.D."/>
            <person name="Fujii C.Y."/>
            <person name="Mason T.M."/>
            <person name="Bowman C.L."/>
            <person name="Barnstead M.E."/>
            <person name="Feldblyum T.V."/>
            <person name="Buell C.R."/>
            <person name="Ketchum K.A."/>
            <person name="Lee J.J."/>
            <person name="Ronning C.M."/>
            <person name="Koo H.L."/>
            <person name="Moffat K.S."/>
            <person name="Cronin L.A."/>
            <person name="Shen M."/>
            <person name="Pai G."/>
            <person name="Van Aken S."/>
            <person name="Umayam L."/>
            <person name="Tallon L.J."/>
            <person name="Gill J.E."/>
            <person name="Adams M.D."/>
            <person name="Carrera A.J."/>
            <person name="Creasy T.H."/>
            <person name="Goodman H.M."/>
            <person name="Somerville C.R."/>
            <person name="Copenhaver G.P."/>
            <person name="Preuss D."/>
            <person name="Nierman W.C."/>
            <person name="White O."/>
            <person name="Eisen J.A."/>
            <person name="Salzberg S.L."/>
            <person name="Fraser C.M."/>
            <person name="Venter J.C."/>
        </authorList>
    </citation>
    <scope>NUCLEOTIDE SEQUENCE [LARGE SCALE GENOMIC DNA]</scope>
    <source>
        <strain>cv. Columbia</strain>
    </source>
</reference>
<reference key="2">
    <citation type="journal article" date="2017" name="Plant J.">
        <title>Araport11: a complete reannotation of the Arabidopsis thaliana reference genome.</title>
        <authorList>
            <person name="Cheng C.Y."/>
            <person name="Krishnakumar V."/>
            <person name="Chan A.P."/>
            <person name="Thibaud-Nissen F."/>
            <person name="Schobel S."/>
            <person name="Town C.D."/>
        </authorList>
    </citation>
    <scope>GENOME REANNOTATION</scope>
    <source>
        <strain>cv. Columbia</strain>
    </source>
</reference>
<reference key="3">
    <citation type="submission" date="2002-03" db="EMBL/GenBank/DDBJ databases">
        <title>Full-length cDNA from Arabidopsis thaliana.</title>
        <authorList>
            <person name="Brover V.V."/>
            <person name="Troukhan M.E."/>
            <person name="Alexandrov N.A."/>
            <person name="Lu Y.-P."/>
            <person name="Flavell R.B."/>
            <person name="Feldmann K.A."/>
        </authorList>
    </citation>
    <scope>NUCLEOTIDE SEQUENCE [LARGE SCALE MRNA]</scope>
</reference>
<reference key="4">
    <citation type="submission" date="2004-09" db="EMBL/GenBank/DDBJ databases">
        <title>Large-scale analysis of RIKEN Arabidopsis full-length (RAFL) cDNAs.</title>
        <authorList>
            <person name="Totoki Y."/>
            <person name="Seki M."/>
            <person name="Ishida J."/>
            <person name="Nakajima M."/>
            <person name="Enju A."/>
            <person name="Kamiya A."/>
            <person name="Narusaka M."/>
            <person name="Shin-i T."/>
            <person name="Nakagawa M."/>
            <person name="Sakamoto N."/>
            <person name="Oishi K."/>
            <person name="Kohara Y."/>
            <person name="Kobayashi M."/>
            <person name="Toyoda A."/>
            <person name="Sakaki Y."/>
            <person name="Sakurai T."/>
            <person name="Iida K."/>
            <person name="Akiyama K."/>
            <person name="Satou M."/>
            <person name="Toyoda T."/>
            <person name="Konagaya A."/>
            <person name="Carninci P."/>
            <person name="Kawai J."/>
            <person name="Hayashizaki Y."/>
            <person name="Shinozaki K."/>
        </authorList>
    </citation>
    <scope>NUCLEOTIDE SEQUENCE [LARGE SCALE MRNA]</scope>
    <source>
        <strain>cv. Columbia</strain>
    </source>
</reference>
<reference key="5">
    <citation type="submission" date="2006-05" db="EMBL/GenBank/DDBJ databases">
        <title>Arabidopsis ORF clones.</title>
        <authorList>
            <person name="Quinitio C."/>
            <person name="Chen H."/>
            <person name="Kim C.J."/>
            <person name="Shinn P."/>
            <person name="Ecker J.R."/>
        </authorList>
    </citation>
    <scope>NUCLEOTIDE SEQUENCE [LARGE SCALE MRNA]</scope>
</reference>
<reference key="6">
    <citation type="journal article" date="2009" name="Plant J.">
        <title>Functional association of cell death suppressor, Arabidopsis Bax inhibitor-1, with fatty acid 2-hydroxylation through cytochrome b(5).</title>
        <authorList>
            <person name="Nagano M."/>
            <person name="Ihara-Ohori Y."/>
            <person name="Imai H."/>
            <person name="Inada N."/>
            <person name="Fujimoto M."/>
            <person name="Tsutsumi N."/>
            <person name="Uchimiya H."/>
            <person name="Kawai-Yamada M."/>
        </authorList>
    </citation>
    <scope>INTERACTION WITH BI-1; FAH1 AND FAH2</scope>
    <scope>NOMENCLATURE</scope>
</reference>
<reference key="7">
    <citation type="journal article" date="2012" name="Plant Cell">
        <title>Reconstitution of plant alkane biosynthesis in yeast demonstrates that Arabidopsis ECERIFERUM1 and ECERIFERUM3 are core components of a very-long-chain alkane synthesis complex.</title>
        <authorList>
            <person name="Bernard A."/>
            <person name="Domergue F."/>
            <person name="Pascal S."/>
            <person name="Jetter R."/>
            <person name="Renne C."/>
            <person name="Faure J.D."/>
            <person name="Haslam R.P."/>
            <person name="Napier J.A."/>
            <person name="Lessire R."/>
            <person name="Joubes J."/>
        </authorList>
    </citation>
    <scope>INTERACTION WITH CER1</scope>
    <scope>SUBCELLULAR LOCATION</scope>
    <source>
        <strain>cv. Columbia</strain>
    </source>
</reference>
<reference key="8">
    <citation type="journal article" date="2012" name="PLoS ONE">
        <title>Higher plant cytochrome b5 polypeptides modulate fatty acid desaturation.</title>
        <authorList>
            <person name="Kumar R."/>
            <person name="Tran L.S."/>
            <person name="Neelakandan A.K."/>
            <person name="Nguyen H.T."/>
        </authorList>
    </citation>
    <scope>FUNCTION</scope>
    <scope>NOMENCLATURE</scope>
</reference>
<dbReference type="EMBL" id="AC005819">
    <property type="protein sequence ID" value="AAC69922.1"/>
    <property type="molecule type" value="Genomic_DNA"/>
</dbReference>
<dbReference type="EMBL" id="AC006418">
    <property type="protein sequence ID" value="AAM15242.1"/>
    <property type="molecule type" value="Genomic_DNA"/>
</dbReference>
<dbReference type="EMBL" id="CP002685">
    <property type="protein sequence ID" value="AEC10735.1"/>
    <property type="molecule type" value="Genomic_DNA"/>
</dbReference>
<dbReference type="EMBL" id="AY087658">
    <property type="protein sequence ID" value="AAM65196.1"/>
    <property type="molecule type" value="mRNA"/>
</dbReference>
<dbReference type="EMBL" id="AK175189">
    <property type="protein sequence ID" value="BAD42952.1"/>
    <property type="molecule type" value="mRNA"/>
</dbReference>
<dbReference type="EMBL" id="AK175442">
    <property type="protein sequence ID" value="BAD43205.1"/>
    <property type="status" value="ALT_INIT"/>
    <property type="molecule type" value="mRNA"/>
</dbReference>
<dbReference type="EMBL" id="BT025600">
    <property type="protein sequence ID" value="ABF59018.1"/>
    <property type="molecule type" value="mRNA"/>
</dbReference>
<dbReference type="PIR" id="E84905">
    <property type="entry name" value="E84905"/>
</dbReference>
<dbReference type="RefSeq" id="NP_182188.1">
    <property type="nucleotide sequence ID" value="NM_130230.3"/>
</dbReference>
<dbReference type="SMR" id="Q9ZNV4"/>
<dbReference type="BioGRID" id="4612">
    <property type="interactions" value="4"/>
</dbReference>
<dbReference type="FunCoup" id="Q9ZNV4">
    <property type="interactions" value="2633"/>
</dbReference>
<dbReference type="IntAct" id="Q9ZNV4">
    <property type="interactions" value="1"/>
</dbReference>
<dbReference type="STRING" id="3702.Q9ZNV4"/>
<dbReference type="PaxDb" id="3702-AT2G46650.1"/>
<dbReference type="ProteomicsDB" id="222738"/>
<dbReference type="EnsemblPlants" id="AT2G46650.1">
    <property type="protein sequence ID" value="AT2G46650.1"/>
    <property type="gene ID" value="AT2G46650"/>
</dbReference>
<dbReference type="GeneID" id="819277"/>
<dbReference type="Gramene" id="AT2G46650.1">
    <property type="protein sequence ID" value="AT2G46650.1"/>
    <property type="gene ID" value="AT2G46650"/>
</dbReference>
<dbReference type="KEGG" id="ath:AT2G46650"/>
<dbReference type="Araport" id="AT2G46650"/>
<dbReference type="TAIR" id="AT2G46650">
    <property type="gene designation" value="CB5-C"/>
</dbReference>
<dbReference type="eggNOG" id="KOG0537">
    <property type="taxonomic scope" value="Eukaryota"/>
</dbReference>
<dbReference type="HOGENOM" id="CLU_102602_3_0_1"/>
<dbReference type="InParanoid" id="Q9ZNV4"/>
<dbReference type="OMA" id="IPAERKH"/>
<dbReference type="OrthoDB" id="260519at2759"/>
<dbReference type="PRO" id="PR:Q9ZNV4"/>
<dbReference type="Proteomes" id="UP000006548">
    <property type="component" value="Chromosome 2"/>
</dbReference>
<dbReference type="ExpressionAtlas" id="Q9ZNV4">
    <property type="expression patterns" value="baseline and differential"/>
</dbReference>
<dbReference type="GO" id="GO:0005829">
    <property type="term" value="C:cytosol"/>
    <property type="evidence" value="ECO:0007005"/>
    <property type="project" value="TAIR"/>
</dbReference>
<dbReference type="GO" id="GO:0005789">
    <property type="term" value="C:endoplasmic reticulum membrane"/>
    <property type="evidence" value="ECO:0007669"/>
    <property type="project" value="UniProtKB-SubCell"/>
</dbReference>
<dbReference type="GO" id="GO:0020037">
    <property type="term" value="F:heme binding"/>
    <property type="evidence" value="ECO:0007669"/>
    <property type="project" value="InterPro"/>
</dbReference>
<dbReference type="GO" id="GO:0046872">
    <property type="term" value="F:metal ion binding"/>
    <property type="evidence" value="ECO:0007669"/>
    <property type="project" value="UniProtKB-KW"/>
</dbReference>
<dbReference type="FunFam" id="3.10.120.10:FF:000002">
    <property type="entry name" value="Cytochrome b5 type B"/>
    <property type="match status" value="1"/>
</dbReference>
<dbReference type="Gene3D" id="3.10.120.10">
    <property type="entry name" value="Cytochrome b5-like heme/steroid binding domain"/>
    <property type="match status" value="1"/>
</dbReference>
<dbReference type="InterPro" id="IPR001199">
    <property type="entry name" value="Cyt_B5-like_heme/steroid-bd"/>
</dbReference>
<dbReference type="InterPro" id="IPR036400">
    <property type="entry name" value="Cyt_B5-like_heme/steroid_sf"/>
</dbReference>
<dbReference type="InterPro" id="IPR018506">
    <property type="entry name" value="Cyt_B5_heme-BS"/>
</dbReference>
<dbReference type="InterPro" id="IPR050668">
    <property type="entry name" value="Cytochrome_b5"/>
</dbReference>
<dbReference type="PANTHER" id="PTHR19359">
    <property type="entry name" value="CYTOCHROME B5"/>
    <property type="match status" value="1"/>
</dbReference>
<dbReference type="PANTHER" id="PTHR19359:SF79">
    <property type="entry name" value="CYTOCHROME B5 ISOFORM C"/>
    <property type="match status" value="1"/>
</dbReference>
<dbReference type="Pfam" id="PF00173">
    <property type="entry name" value="Cyt-b5"/>
    <property type="match status" value="1"/>
</dbReference>
<dbReference type="PRINTS" id="PR00363">
    <property type="entry name" value="CYTOCHROMEB5"/>
</dbReference>
<dbReference type="SMART" id="SM01117">
    <property type="entry name" value="Cyt-b5"/>
    <property type="match status" value="1"/>
</dbReference>
<dbReference type="SUPFAM" id="SSF55856">
    <property type="entry name" value="Cytochrome b5-like heme/steroid binding domain"/>
    <property type="match status" value="1"/>
</dbReference>
<dbReference type="PROSITE" id="PS00191">
    <property type="entry name" value="CYTOCHROME_B5_1"/>
    <property type="match status" value="1"/>
</dbReference>
<dbReference type="PROSITE" id="PS50255">
    <property type="entry name" value="CYTOCHROME_B5_2"/>
    <property type="match status" value="1"/>
</dbReference>
<comment type="function">
    <text evidence="4">Membrane bound hemoprotein which function as an electron carrier for several membrane bound oxygenases, including fatty acid desaturases.</text>
</comment>
<comment type="subunit">
    <text evidence="3 5">Interacts with CER1, BI-1, FAH1 and FAH2.</text>
</comment>
<comment type="subcellular location">
    <subcellularLocation>
        <location evidence="5">Endoplasmic reticulum membrane</location>
        <topology evidence="5">Single-pass membrane protein</topology>
    </subcellularLocation>
</comment>
<comment type="similarity">
    <text evidence="8">Belongs to the cytochrome b5 family.</text>
</comment>
<comment type="sequence caution" evidence="8">
    <conflict type="erroneous initiation">
        <sequence resource="EMBL-CDS" id="BAD43205"/>
    </conflict>
    <text>Extended N-terminus.</text>
</comment>
<evidence type="ECO:0000255" key="1"/>
<evidence type="ECO:0000255" key="2">
    <source>
        <dbReference type="PROSITE-ProRule" id="PRU00279"/>
    </source>
</evidence>
<evidence type="ECO:0000269" key="3">
    <source>
    </source>
</evidence>
<evidence type="ECO:0000269" key="4">
    <source>
    </source>
</evidence>
<evidence type="ECO:0000269" key="5">
    <source>
    </source>
</evidence>
<evidence type="ECO:0000303" key="6">
    <source>
    </source>
</evidence>
<evidence type="ECO:0000303" key="7">
    <source>
    </source>
</evidence>
<evidence type="ECO:0000305" key="8"/>
<accession>Q9ZNV4</accession>
<accession>Q682C5</accession>